<feature type="signal peptide" evidence="1">
    <location>
        <begin position="1"/>
        <end position="19"/>
    </location>
</feature>
<feature type="chain" id="PRO_0000034269" description="Thiol:disulfide interchange protein DsbA">
    <location>
        <begin position="20"/>
        <end position="207"/>
    </location>
</feature>
<feature type="domain" description="Thioredoxin" evidence="2">
    <location>
        <begin position="20"/>
        <end position="149"/>
    </location>
</feature>
<feature type="disulfide bond" description="Redox-active" evidence="2">
    <location>
        <begin position="49"/>
        <end position="52"/>
    </location>
</feature>
<organism>
    <name type="scientific">Yersinia pestis</name>
    <dbReference type="NCBI Taxonomy" id="632"/>
    <lineage>
        <taxon>Bacteria</taxon>
        <taxon>Pseudomonadati</taxon>
        <taxon>Pseudomonadota</taxon>
        <taxon>Gammaproteobacteria</taxon>
        <taxon>Enterobacterales</taxon>
        <taxon>Yersiniaceae</taxon>
        <taxon>Yersinia</taxon>
    </lineage>
</organism>
<keyword id="KW-1015">Disulfide bond</keyword>
<keyword id="KW-0574">Periplasm</keyword>
<keyword id="KW-0676">Redox-active center</keyword>
<keyword id="KW-1185">Reference proteome</keyword>
<keyword id="KW-0732">Signal</keyword>
<comment type="function">
    <text evidence="1">Required for disulfide bond formation in some periplasmic proteins such as PhoA or OmpA. Acts by transferring its disulfide bond to other proteins and is reduced in the process. DsbA is reoxidized by DsbB. It is required for pilus biogenesis (By similarity).</text>
</comment>
<comment type="subcellular location">
    <subcellularLocation>
        <location>Periplasm</location>
    </subcellularLocation>
</comment>
<comment type="similarity">
    <text evidence="3">Belongs to the thioredoxin family. DsbA subfamily.</text>
</comment>
<reference key="1">
    <citation type="journal article" date="1999" name="J. Bacteriol.">
        <title>DsbA is required for stable expression of outer membrane protein YscC and for efficient Yop secretion in Yersinia pestis.</title>
        <authorList>
            <person name="Jackson M.W."/>
            <person name="Plano G.V."/>
        </authorList>
    </citation>
    <scope>NUCLEOTIDE SEQUENCE [GENOMIC DNA]</scope>
    <source>
        <strain>KIM</strain>
    </source>
</reference>
<reference key="2">
    <citation type="journal article" date="2001" name="Nature">
        <title>Genome sequence of Yersinia pestis, the causative agent of plague.</title>
        <authorList>
            <person name="Parkhill J."/>
            <person name="Wren B.W."/>
            <person name="Thomson N.R."/>
            <person name="Titball R.W."/>
            <person name="Holden M.T.G."/>
            <person name="Prentice M.B."/>
            <person name="Sebaihia M."/>
            <person name="James K.D."/>
            <person name="Churcher C.M."/>
            <person name="Mungall K.L."/>
            <person name="Baker S."/>
            <person name="Basham D."/>
            <person name="Bentley S.D."/>
            <person name="Brooks K."/>
            <person name="Cerdeno-Tarraga A.-M."/>
            <person name="Chillingworth T."/>
            <person name="Cronin A."/>
            <person name="Davies R.M."/>
            <person name="Davis P."/>
            <person name="Dougan G."/>
            <person name="Feltwell T."/>
            <person name="Hamlin N."/>
            <person name="Holroyd S."/>
            <person name="Jagels K."/>
            <person name="Karlyshev A.V."/>
            <person name="Leather S."/>
            <person name="Moule S."/>
            <person name="Oyston P.C.F."/>
            <person name="Quail M.A."/>
            <person name="Rutherford K.M."/>
            <person name="Simmonds M."/>
            <person name="Skelton J."/>
            <person name="Stevens K."/>
            <person name="Whitehead S."/>
            <person name="Barrell B.G."/>
        </authorList>
    </citation>
    <scope>NUCLEOTIDE SEQUENCE [LARGE SCALE GENOMIC DNA]</scope>
    <source>
        <strain>CO-92 / Biovar Orientalis</strain>
    </source>
</reference>
<reference key="3">
    <citation type="journal article" date="2002" name="J. Bacteriol.">
        <title>Genome sequence of Yersinia pestis KIM.</title>
        <authorList>
            <person name="Deng W."/>
            <person name="Burland V."/>
            <person name="Plunkett G. III"/>
            <person name="Boutin A."/>
            <person name="Mayhew G.F."/>
            <person name="Liss P."/>
            <person name="Perna N.T."/>
            <person name="Rose D.J."/>
            <person name="Mau B."/>
            <person name="Zhou S."/>
            <person name="Schwartz D.C."/>
            <person name="Fetherston J.D."/>
            <person name="Lindler L.E."/>
            <person name="Brubaker R.R."/>
            <person name="Plano G.V."/>
            <person name="Straley S.C."/>
            <person name="McDonough K.A."/>
            <person name="Nilles M.L."/>
            <person name="Matson J.S."/>
            <person name="Blattner F.R."/>
            <person name="Perry R.D."/>
        </authorList>
    </citation>
    <scope>NUCLEOTIDE SEQUENCE [LARGE SCALE GENOMIC DNA]</scope>
    <source>
        <strain>KIM10+ / Biovar Mediaevalis</strain>
    </source>
</reference>
<reference key="4">
    <citation type="journal article" date="2004" name="DNA Res.">
        <title>Complete genome sequence of Yersinia pestis strain 91001, an isolate avirulent to humans.</title>
        <authorList>
            <person name="Song Y."/>
            <person name="Tong Z."/>
            <person name="Wang J."/>
            <person name="Wang L."/>
            <person name="Guo Z."/>
            <person name="Han Y."/>
            <person name="Zhang J."/>
            <person name="Pei D."/>
            <person name="Zhou D."/>
            <person name="Qin H."/>
            <person name="Pang X."/>
            <person name="Han Y."/>
            <person name="Zhai J."/>
            <person name="Li M."/>
            <person name="Cui B."/>
            <person name="Qi Z."/>
            <person name="Jin L."/>
            <person name="Dai R."/>
            <person name="Chen F."/>
            <person name="Li S."/>
            <person name="Ye C."/>
            <person name="Du Z."/>
            <person name="Lin W."/>
            <person name="Wang J."/>
            <person name="Yu J."/>
            <person name="Yang H."/>
            <person name="Wang J."/>
            <person name="Huang P."/>
            <person name="Yang R."/>
        </authorList>
    </citation>
    <scope>NUCLEOTIDE SEQUENCE [LARGE SCALE GENOMIC DNA]</scope>
    <source>
        <strain>91001 / Biovar Mediaevalis</strain>
    </source>
</reference>
<accession>Q9XBV2</accession>
<accession>Q0WKS6</accession>
<proteinExistence type="inferred from homology"/>
<name>DSBA_YERPE</name>
<protein>
    <recommendedName>
        <fullName>Thiol:disulfide interchange protein DsbA</fullName>
    </recommendedName>
</protein>
<sequence length="207" mass="23100">MKNVWLALVGIVMAFSVTAAQFTDGKQYLTLDKPVTGEPQVLEFFSFYCPHCYQFEEVYQVPKAVKKALPEGTKMTRYHVEFLGPLGKQLTQAWAVAMALGVEEKITPLMFEGVQKTQTVQTPGDIRNVFIKAGISGEDYDAALNSFVVKSLVAQQQKAAEDLQLRGVPAMFVNGKYMIKNDGMDTSSMDNYVKQYADVVTFLLTQK</sequence>
<dbReference type="EMBL" id="AF155130">
    <property type="protein sequence ID" value="AAD38401.1"/>
    <property type="molecule type" value="Genomic_DNA"/>
</dbReference>
<dbReference type="EMBL" id="AL590842">
    <property type="protein sequence ID" value="CAL18706.1"/>
    <property type="molecule type" value="Genomic_DNA"/>
</dbReference>
<dbReference type="EMBL" id="AE009952">
    <property type="protein sequence ID" value="AAM87357.1"/>
    <property type="molecule type" value="Genomic_DNA"/>
</dbReference>
<dbReference type="EMBL" id="AE017042">
    <property type="protein sequence ID" value="AAS60298.1"/>
    <property type="molecule type" value="Genomic_DNA"/>
</dbReference>
<dbReference type="PIR" id="AI0002">
    <property type="entry name" value="AI0002"/>
</dbReference>
<dbReference type="RefSeq" id="WP_002213168.1">
    <property type="nucleotide sequence ID" value="NZ_WUCM01000127.1"/>
</dbReference>
<dbReference type="RefSeq" id="YP_002345112.1">
    <property type="nucleotide sequence ID" value="NC_003143.1"/>
</dbReference>
<dbReference type="SMR" id="Q9XBV2"/>
<dbReference type="STRING" id="214092.YPO0015"/>
<dbReference type="PaxDb" id="214092-YPO0015"/>
<dbReference type="DNASU" id="1148759"/>
<dbReference type="EnsemblBacteria" id="AAS60298">
    <property type="protein sequence ID" value="AAS60298"/>
    <property type="gene ID" value="YP_0017"/>
</dbReference>
<dbReference type="GeneID" id="96663492"/>
<dbReference type="KEGG" id="ype:YPO0015"/>
<dbReference type="KEGG" id="ypk:y3812"/>
<dbReference type="KEGG" id="ypm:YP_0017"/>
<dbReference type="PATRIC" id="fig|1028802.3.peg.1672"/>
<dbReference type="eggNOG" id="COG1651">
    <property type="taxonomic scope" value="Bacteria"/>
</dbReference>
<dbReference type="HOGENOM" id="CLU_088255_3_0_6"/>
<dbReference type="OMA" id="NAIHKQK"/>
<dbReference type="OrthoDB" id="9784896at2"/>
<dbReference type="Proteomes" id="UP000000815">
    <property type="component" value="Chromosome"/>
</dbReference>
<dbReference type="Proteomes" id="UP000001019">
    <property type="component" value="Chromosome"/>
</dbReference>
<dbReference type="Proteomes" id="UP000002490">
    <property type="component" value="Chromosome"/>
</dbReference>
<dbReference type="GO" id="GO:0030288">
    <property type="term" value="C:outer membrane-bounded periplasmic space"/>
    <property type="evidence" value="ECO:0000318"/>
    <property type="project" value="GO_Central"/>
</dbReference>
<dbReference type="GO" id="GO:0003756">
    <property type="term" value="F:protein disulfide isomerase activity"/>
    <property type="evidence" value="ECO:0000318"/>
    <property type="project" value="GO_Central"/>
</dbReference>
<dbReference type="GO" id="GO:0015035">
    <property type="term" value="F:protein-disulfide reductase activity"/>
    <property type="evidence" value="ECO:0000318"/>
    <property type="project" value="GO_Central"/>
</dbReference>
<dbReference type="GO" id="GO:0071236">
    <property type="term" value="P:cellular response to antibiotic"/>
    <property type="evidence" value="ECO:0000318"/>
    <property type="project" value="GO_Central"/>
</dbReference>
<dbReference type="CDD" id="cd03019">
    <property type="entry name" value="DsbA_DsbA"/>
    <property type="match status" value="1"/>
</dbReference>
<dbReference type="Gene3D" id="3.40.30.10">
    <property type="entry name" value="Glutaredoxin"/>
    <property type="match status" value="1"/>
</dbReference>
<dbReference type="InterPro" id="IPR001853">
    <property type="entry name" value="DSBA-like_thioredoxin_dom"/>
</dbReference>
<dbReference type="InterPro" id="IPR023205">
    <property type="entry name" value="DsbA/DsbL"/>
</dbReference>
<dbReference type="InterPro" id="IPR050824">
    <property type="entry name" value="Thiol_disulfide_DsbA"/>
</dbReference>
<dbReference type="InterPro" id="IPR036249">
    <property type="entry name" value="Thioredoxin-like_sf"/>
</dbReference>
<dbReference type="InterPro" id="IPR017937">
    <property type="entry name" value="Thioredoxin_CS"/>
</dbReference>
<dbReference type="InterPro" id="IPR013766">
    <property type="entry name" value="Thioredoxin_domain"/>
</dbReference>
<dbReference type="NCBIfam" id="NF008198">
    <property type="entry name" value="PRK10954.1"/>
    <property type="match status" value="1"/>
</dbReference>
<dbReference type="PANTHER" id="PTHR35891">
    <property type="entry name" value="THIOL:DISULFIDE INTERCHANGE PROTEIN DSBA"/>
    <property type="match status" value="1"/>
</dbReference>
<dbReference type="PANTHER" id="PTHR35891:SF2">
    <property type="entry name" value="THIOL:DISULFIDE INTERCHANGE PROTEIN DSBA"/>
    <property type="match status" value="1"/>
</dbReference>
<dbReference type="Pfam" id="PF01323">
    <property type="entry name" value="DSBA"/>
    <property type="match status" value="1"/>
</dbReference>
<dbReference type="PIRSF" id="PIRSF001488">
    <property type="entry name" value="Tdi_protein"/>
    <property type="match status" value="1"/>
</dbReference>
<dbReference type="SUPFAM" id="SSF52833">
    <property type="entry name" value="Thioredoxin-like"/>
    <property type="match status" value="1"/>
</dbReference>
<dbReference type="PROSITE" id="PS00194">
    <property type="entry name" value="THIOREDOXIN_1"/>
    <property type="match status" value="1"/>
</dbReference>
<dbReference type="PROSITE" id="PS51352">
    <property type="entry name" value="THIOREDOXIN_2"/>
    <property type="match status" value="1"/>
</dbReference>
<evidence type="ECO:0000250" key="1"/>
<evidence type="ECO:0000255" key="2">
    <source>
        <dbReference type="PROSITE-ProRule" id="PRU00691"/>
    </source>
</evidence>
<evidence type="ECO:0000305" key="3"/>
<gene>
    <name type="primary">dsbA</name>
    <name type="ordered locus">YPO0015</name>
    <name type="ordered locus">y3812</name>
    <name type="ordered locus">YP_0017</name>
</gene>